<organism>
    <name type="scientific">Corynebacterium diphtheriae (strain ATCC 700971 / NCTC 13129 / Biotype gravis)</name>
    <dbReference type="NCBI Taxonomy" id="257309"/>
    <lineage>
        <taxon>Bacteria</taxon>
        <taxon>Bacillati</taxon>
        <taxon>Actinomycetota</taxon>
        <taxon>Actinomycetes</taxon>
        <taxon>Mycobacteriales</taxon>
        <taxon>Corynebacteriaceae</taxon>
        <taxon>Corynebacterium</taxon>
    </lineage>
</organism>
<name>Y1313_CORDI</name>
<feature type="chain" id="PRO_0000107700" description="Nucleotide-binding protein DIP1313">
    <location>
        <begin position="1"/>
        <end position="299"/>
    </location>
</feature>
<feature type="binding site" evidence="1">
    <location>
        <begin position="22"/>
        <end position="29"/>
    </location>
    <ligand>
        <name>ATP</name>
        <dbReference type="ChEBI" id="CHEBI:30616"/>
    </ligand>
</feature>
<feature type="binding site" evidence="1">
    <location>
        <begin position="73"/>
        <end position="76"/>
    </location>
    <ligand>
        <name>GTP</name>
        <dbReference type="ChEBI" id="CHEBI:37565"/>
    </ligand>
</feature>
<protein>
    <recommendedName>
        <fullName evidence="1">Nucleotide-binding protein DIP1313</fullName>
    </recommendedName>
</protein>
<accession>Q6NH32</accession>
<keyword id="KW-0067">ATP-binding</keyword>
<keyword id="KW-0342">GTP-binding</keyword>
<keyword id="KW-0547">Nucleotide-binding</keyword>
<keyword id="KW-1185">Reference proteome</keyword>
<sequence>MNLNMRTDVEPRTEIPPVVITGLSGAGLSSAARVLEDMGWYVTQNIPSQFVVQLVELCADPHSPVDKIAIVSDVRSKEFSGSLEEVISELSGLGLKPLVVFMDARNDVLIKRFDNLRRTHPLQGSGTLLVGIEREREIMNQIKESADVVIDTSDLSIHDLRRSIELNFNGIANKLQHVTVQSFGFKHGSPRDTDLLIDVRFLPNPFWVPELRPFRGTDKPVSDYVLADEGAQKFLDNFTRMLRDMRPGFKHEGKNFITVSVGCTGGHHRSVAIAEELARRLREVPDLDVSVNHRDIARN</sequence>
<reference key="1">
    <citation type="journal article" date="2003" name="Nucleic Acids Res.">
        <title>The complete genome sequence and analysis of Corynebacterium diphtheriae NCTC13129.</title>
        <authorList>
            <person name="Cerdeno-Tarraga A.-M."/>
            <person name="Efstratiou A."/>
            <person name="Dover L.G."/>
            <person name="Holden M.T.G."/>
            <person name="Pallen M.J."/>
            <person name="Bentley S.D."/>
            <person name="Besra G.S."/>
            <person name="Churcher C.M."/>
            <person name="James K.D."/>
            <person name="De Zoysa A."/>
            <person name="Chillingworth T."/>
            <person name="Cronin A."/>
            <person name="Dowd L."/>
            <person name="Feltwell T."/>
            <person name="Hamlin N."/>
            <person name="Holroyd S."/>
            <person name="Jagels K."/>
            <person name="Moule S."/>
            <person name="Quail M.A."/>
            <person name="Rabbinowitsch E."/>
            <person name="Rutherford K.M."/>
            <person name="Thomson N.R."/>
            <person name="Unwin L."/>
            <person name="Whitehead S."/>
            <person name="Barrell B.G."/>
            <person name="Parkhill J."/>
        </authorList>
    </citation>
    <scope>NUCLEOTIDE SEQUENCE [LARGE SCALE GENOMIC DNA]</scope>
    <source>
        <strain>ATCC 700971 / NCTC 13129 / Biotype gravis</strain>
    </source>
</reference>
<comment type="function">
    <text evidence="1">Displays ATPase and GTPase activities.</text>
</comment>
<comment type="similarity">
    <text evidence="1">Belongs to the RapZ-like family.</text>
</comment>
<dbReference type="EMBL" id="BX248357">
    <property type="protein sequence ID" value="CAE49841.1"/>
    <property type="molecule type" value="Genomic_DNA"/>
</dbReference>
<dbReference type="SMR" id="Q6NH32"/>
<dbReference type="STRING" id="257309.DIP1313"/>
<dbReference type="KEGG" id="cdi:DIP1313"/>
<dbReference type="HOGENOM" id="CLU_059558_0_0_11"/>
<dbReference type="Proteomes" id="UP000002198">
    <property type="component" value="Chromosome"/>
</dbReference>
<dbReference type="GO" id="GO:0005524">
    <property type="term" value="F:ATP binding"/>
    <property type="evidence" value="ECO:0007669"/>
    <property type="project" value="UniProtKB-UniRule"/>
</dbReference>
<dbReference type="GO" id="GO:0005525">
    <property type="term" value="F:GTP binding"/>
    <property type="evidence" value="ECO:0007669"/>
    <property type="project" value="UniProtKB-UniRule"/>
</dbReference>
<dbReference type="HAMAP" id="MF_00636">
    <property type="entry name" value="RapZ_like"/>
    <property type="match status" value="1"/>
</dbReference>
<dbReference type="InterPro" id="IPR027417">
    <property type="entry name" value="P-loop_NTPase"/>
</dbReference>
<dbReference type="InterPro" id="IPR005337">
    <property type="entry name" value="RapZ-like"/>
</dbReference>
<dbReference type="InterPro" id="IPR053930">
    <property type="entry name" value="RapZ-like_N"/>
</dbReference>
<dbReference type="InterPro" id="IPR053931">
    <property type="entry name" value="RapZ_C"/>
</dbReference>
<dbReference type="NCBIfam" id="NF003828">
    <property type="entry name" value="PRK05416.1"/>
    <property type="match status" value="1"/>
</dbReference>
<dbReference type="PANTHER" id="PTHR30448">
    <property type="entry name" value="RNASE ADAPTER PROTEIN RAPZ"/>
    <property type="match status" value="1"/>
</dbReference>
<dbReference type="PANTHER" id="PTHR30448:SF0">
    <property type="entry name" value="RNASE ADAPTER PROTEIN RAPZ"/>
    <property type="match status" value="1"/>
</dbReference>
<dbReference type="Pfam" id="PF22740">
    <property type="entry name" value="PapZ_C"/>
    <property type="match status" value="1"/>
</dbReference>
<dbReference type="Pfam" id="PF03668">
    <property type="entry name" value="RapZ-like_N"/>
    <property type="match status" value="1"/>
</dbReference>
<dbReference type="PIRSF" id="PIRSF005052">
    <property type="entry name" value="P-loopkin"/>
    <property type="match status" value="1"/>
</dbReference>
<dbReference type="SUPFAM" id="SSF52540">
    <property type="entry name" value="P-loop containing nucleoside triphosphate hydrolases"/>
    <property type="match status" value="1"/>
</dbReference>
<proteinExistence type="inferred from homology"/>
<gene>
    <name type="ordered locus">DIP1313</name>
</gene>
<evidence type="ECO:0000255" key="1">
    <source>
        <dbReference type="HAMAP-Rule" id="MF_00636"/>
    </source>
</evidence>